<dbReference type="EC" id="2.7.7.48" evidence="1"/>
<dbReference type="EMBL" id="AF170575">
    <property type="protein sequence ID" value="AAF89738.2"/>
    <property type="molecule type" value="Genomic_RNA"/>
</dbReference>
<dbReference type="PDB" id="5D98">
    <property type="method" value="X-ray"/>
    <property type="resolution" value="3.90 A"/>
    <property type="chains" value="B/E=1-754"/>
</dbReference>
<dbReference type="PDB" id="5D9A">
    <property type="method" value="X-ray"/>
    <property type="resolution" value="4.30 A"/>
    <property type="chains" value="B/E/H/K=1-754"/>
</dbReference>
<dbReference type="PDB" id="6F5P">
    <property type="method" value="X-ray"/>
    <property type="resolution" value="4.14 A"/>
    <property type="chains" value="B/C=1-754"/>
</dbReference>
<dbReference type="PDB" id="6XZD">
    <property type="method" value="EM"/>
    <property type="resolution" value="3.40 A"/>
    <property type="chains" value="BP1/EP1=1-754"/>
</dbReference>
<dbReference type="PDB" id="6XZG">
    <property type="method" value="EM"/>
    <property type="resolution" value="3.80 A"/>
    <property type="chains" value="BP1/EP1=1-754"/>
</dbReference>
<dbReference type="PDB" id="6XZP">
    <property type="method" value="EM"/>
    <property type="resolution" value="3.30 A"/>
    <property type="chains" value="BP1/EP1=1-754"/>
</dbReference>
<dbReference type="PDB" id="6XZQ">
    <property type="method" value="EM"/>
    <property type="resolution" value="3.60 A"/>
    <property type="chains" value="B/E=1-754"/>
</dbReference>
<dbReference type="PDB" id="6XZR">
    <property type="method" value="EM"/>
    <property type="resolution" value="3.30 A"/>
    <property type="chains" value="BP1/EP1=1-754"/>
</dbReference>
<dbReference type="PDB" id="6Y0C">
    <property type="method" value="EM"/>
    <property type="resolution" value="3.20 A"/>
    <property type="chains" value="B=1-754"/>
</dbReference>
<dbReference type="PDBsum" id="5D98"/>
<dbReference type="PDBsum" id="5D9A"/>
<dbReference type="PDBsum" id="6F5P"/>
<dbReference type="PDBsum" id="6XZD"/>
<dbReference type="PDBsum" id="6XZG"/>
<dbReference type="PDBsum" id="6XZP"/>
<dbReference type="PDBsum" id="6XZQ"/>
<dbReference type="PDBsum" id="6XZR"/>
<dbReference type="PDBsum" id="6Y0C"/>
<dbReference type="EMDB" id="EMD-10659"/>
<dbReference type="EMDB" id="EMD-10662"/>
<dbReference type="EMDB" id="EMD-10664"/>
<dbReference type="EMDB" id="EMD-10665"/>
<dbReference type="EMDB" id="EMD-10666"/>
<dbReference type="EMDB" id="EMD-10667"/>
<dbReference type="SMR" id="Q9IMP4"/>
<dbReference type="DIP" id="DIP-61787N"/>
<dbReference type="IntAct" id="Q9IMP4">
    <property type="interactions" value="1"/>
</dbReference>
<dbReference type="EvolutionaryTrace" id="Q9IMP4"/>
<dbReference type="Proteomes" id="UP000138885">
    <property type="component" value="Genome"/>
</dbReference>
<dbReference type="GO" id="GO:0030430">
    <property type="term" value="C:host cell cytoplasm"/>
    <property type="evidence" value="ECO:0007669"/>
    <property type="project" value="UniProtKB-SubCell"/>
</dbReference>
<dbReference type="GO" id="GO:0042025">
    <property type="term" value="C:host cell nucleus"/>
    <property type="evidence" value="ECO:0007669"/>
    <property type="project" value="UniProtKB-SubCell"/>
</dbReference>
<dbReference type="GO" id="GO:0000166">
    <property type="term" value="F:nucleotide binding"/>
    <property type="evidence" value="ECO:0007669"/>
    <property type="project" value="UniProtKB-UniRule"/>
</dbReference>
<dbReference type="GO" id="GO:0003723">
    <property type="term" value="F:RNA binding"/>
    <property type="evidence" value="ECO:0007669"/>
    <property type="project" value="InterPro"/>
</dbReference>
<dbReference type="GO" id="GO:0003968">
    <property type="term" value="F:RNA-directed RNA polymerase activity"/>
    <property type="evidence" value="ECO:0007669"/>
    <property type="project" value="UniProtKB-UniRule"/>
</dbReference>
<dbReference type="GO" id="GO:0006351">
    <property type="term" value="P:DNA-templated transcription"/>
    <property type="evidence" value="ECO:0007669"/>
    <property type="project" value="UniProtKB-UniRule"/>
</dbReference>
<dbReference type="GO" id="GO:0039657">
    <property type="term" value="P:symbiont-mediated suppression of host gene expression"/>
    <property type="evidence" value="ECO:0007669"/>
    <property type="project" value="UniProtKB-KW"/>
</dbReference>
<dbReference type="GO" id="GO:0039523">
    <property type="term" value="P:symbiont-mediated suppression of host mRNA transcription via inhibition of RNA polymerase II activity"/>
    <property type="evidence" value="ECO:0007669"/>
    <property type="project" value="UniProtKB-UniRule"/>
</dbReference>
<dbReference type="GO" id="GO:0039694">
    <property type="term" value="P:viral RNA genome replication"/>
    <property type="evidence" value="ECO:0007669"/>
    <property type="project" value="UniProtKB-UniRule"/>
</dbReference>
<dbReference type="GO" id="GO:0019083">
    <property type="term" value="P:viral transcription"/>
    <property type="evidence" value="ECO:0007669"/>
    <property type="project" value="UniProtKB-KW"/>
</dbReference>
<dbReference type="Gene3D" id="6.10.140.720">
    <property type="match status" value="1"/>
</dbReference>
<dbReference type="HAMAP" id="MF_04065">
    <property type="entry name" value="INFV_RDRP"/>
    <property type="match status" value="1"/>
</dbReference>
<dbReference type="InterPro" id="IPR007099">
    <property type="entry name" value="RNA-dir_pol_NSvirus"/>
</dbReference>
<dbReference type="InterPro" id="IPR001407">
    <property type="entry name" value="RNA_pol_PB1_influenza"/>
</dbReference>
<dbReference type="Pfam" id="PF00602">
    <property type="entry name" value="Flu_PB1"/>
    <property type="match status" value="1"/>
</dbReference>
<dbReference type="PIRSF" id="PIRSF000827">
    <property type="entry name" value="RdRPol_OMV"/>
    <property type="match status" value="1"/>
</dbReference>
<dbReference type="PROSITE" id="PS50525">
    <property type="entry name" value="RDRP_SSRNA_NEG_SEG"/>
    <property type="match status" value="1"/>
</dbReference>
<keyword id="KW-0002">3D-structure</keyword>
<keyword id="KW-1262">Eukaryotic host gene expression shutoff by virus</keyword>
<keyword id="KW-1191">Eukaryotic host transcription shutoff by virus</keyword>
<keyword id="KW-1035">Host cytoplasm</keyword>
<keyword id="KW-1190">Host gene expression shutoff by virus</keyword>
<keyword id="KW-1048">Host nucleus</keyword>
<keyword id="KW-0945">Host-virus interaction</keyword>
<keyword id="KW-1104">Inhibition of host RNA polymerase II by virus</keyword>
<keyword id="KW-0547">Nucleotide-binding</keyword>
<keyword id="KW-0548">Nucleotidyltransferase</keyword>
<keyword id="KW-0597">Phosphoprotein</keyword>
<keyword id="KW-0696">RNA-directed RNA polymerase</keyword>
<keyword id="KW-0808">Transferase</keyword>
<keyword id="KW-0693">Viral RNA replication</keyword>
<keyword id="KW-1195">Viral transcription</keyword>
<protein>
    <recommendedName>
        <fullName evidence="1">RNA-directed RNA polymerase catalytic subunit</fullName>
        <ecNumber evidence="1">2.7.7.48</ecNumber>
    </recommendedName>
    <alternativeName>
        <fullName evidence="1">Polymerase basic protein 1</fullName>
        <shortName evidence="1">PB1</shortName>
    </alternativeName>
    <alternativeName>
        <fullName evidence="1">RNA-directed RNA polymerase subunit P1</fullName>
    </alternativeName>
</protein>
<gene>
    <name evidence="1" type="primary">PB1</name>
</gene>
<accession>Q9IMP4</accession>
<sequence length="754" mass="86025">MEINPYLMFLNNDVTSLISTTYPYTGPPPMSHGSSTKYTLETIKRTYDYSRTSVEKTSKVFNIPRRKFCNCLEDKDELVKPTGNVDISSLLGLAEMMEKRMGEGFFKHCVMEAETEILKMHFSRLTEGRQTYDWTSERNMPAATALQLTVDAIKETEGPFKGTTMLEYCNKMIEMLDWKEIKFKKVKTVVRREKDKRSGKEIKTKVPVMGIDSIKHDEFLIRALTINTMAKDGERGKLQRRAIATPGMIVRPFSKIVETVAQKICEKLKESGLPVGGNEKKAKLKTTVTSLNARMNSDQFAVNITGDNSKWNECQQPEAYLALLAYITKDSSDLMKDLCSVAPVLFCNKFVKLGQGIRLSNKRKTKEVIIKAEKMGKYKNLMREEYKNLFEPLEKYIQKDVCFLPGGMLMGMFNMLSTVLGVSTLCYMDEELKAKGCFWTGLQSSDDFVLFAVASNWSNIHWTIRRFNAVCKLIGINMSLEKSYGSLPELFEFTSMFFDGEFVSNLAMELPAFTTAGVNEGVDFTAAMSIIKTNMINNSLSPSTALMALRICLQEFRATYRVHPWDSRVKGGRMKIINEFIKTIENKDGLLIADGGKLMNNISTLHIPEEVLKFEKMDEQYRNRVFNPKNPFTNFDKTIDIFRAHGPIRVEENEAVVSTHSFRTRANRTLLNTDMRAMMAEEKRYQMVCDMFKSVFESADINPPIGAMSIGEAIEEKLLERAKMKRDIGAIEDSEYEEIKDIIRDAKKARLESR</sequence>
<organism>
    <name type="scientific">Influenza C virus (strain C/Johannesburg/1/1966)</name>
    <dbReference type="NCBI Taxonomy" id="100673"/>
    <lineage>
        <taxon>Viruses</taxon>
        <taxon>Riboviria</taxon>
        <taxon>Orthornavirae</taxon>
        <taxon>Negarnaviricota</taxon>
        <taxon>Polyploviricotina</taxon>
        <taxon>Insthoviricetes</taxon>
        <taxon>Articulavirales</taxon>
        <taxon>Orthomyxoviridae</taxon>
        <taxon>Gammainfluenzavirus</taxon>
        <taxon>Gammainfluenzavirus influenzae</taxon>
        <taxon>Influenza C virus</taxon>
    </lineage>
</organism>
<evidence type="ECO:0000255" key="1">
    <source>
        <dbReference type="HAMAP-Rule" id="MF_04065"/>
    </source>
</evidence>
<feature type="chain" id="PRO_0000269900" description="RNA-directed RNA polymerase catalytic subunit">
    <location>
        <begin position="1"/>
        <end position="754"/>
    </location>
</feature>
<feature type="domain" description="RdRp catalytic" evidence="1">
    <location>
        <begin position="288"/>
        <end position="484"/>
    </location>
</feature>
<feature type="region of interest" description="Promoter-binding site" evidence="1">
    <location>
        <begin position="251"/>
        <end position="258"/>
    </location>
</feature>
<feature type="short sequence motif" description="Nuclear localization signal" evidence="1">
    <location>
        <begin position="189"/>
        <end position="197"/>
    </location>
</feature>
<feature type="short sequence motif" description="Nuclear localization signal" evidence="1">
    <location>
        <begin position="205"/>
        <end position="218"/>
    </location>
</feature>
<proteinExistence type="evidence at protein level"/>
<name>RDRP_INCJH</name>
<organismHost>
    <name type="scientific">Homo sapiens</name>
    <name type="common">Human</name>
    <dbReference type="NCBI Taxonomy" id="9606"/>
</organismHost>
<organismHost>
    <name type="scientific">Sus scrofa</name>
    <name type="common">Pig</name>
    <dbReference type="NCBI Taxonomy" id="9823"/>
</organismHost>
<comment type="function">
    <text evidence="1">RNA-dependent RNA polymerase which is responsible for replication and transcription of virus RNA segments. The transcription of viral mRNAs occurs by a unique mechanism called cap-snatching. 5' methylated caps of cellular mRNAs are cleaved after 10-13 nucleotides by PA. In turn, these short capped RNAs are used as primers by PB1 for transcription of viral mRNAs. During virus replication, PB1 initiates RNA synthesis and copy vRNA into complementary RNA (cRNA) which in turn serves as a template for the production of more vRNAs.</text>
</comment>
<comment type="catalytic activity">
    <reaction evidence="1">
        <text>RNA(n) + a ribonucleoside 5'-triphosphate = RNA(n+1) + diphosphate</text>
        <dbReference type="Rhea" id="RHEA:21248"/>
        <dbReference type="Rhea" id="RHEA-COMP:14527"/>
        <dbReference type="Rhea" id="RHEA-COMP:17342"/>
        <dbReference type="ChEBI" id="CHEBI:33019"/>
        <dbReference type="ChEBI" id="CHEBI:61557"/>
        <dbReference type="ChEBI" id="CHEBI:140395"/>
        <dbReference type="EC" id="2.7.7.48"/>
    </reaction>
</comment>
<comment type="subunit">
    <text evidence="1">Influenza RNA polymerase is composed of three subunits: PB1, PB2 and PA. Interacts (via N-terminus) with PA (via C-terminus). Interacts (via C-terminus) with PB2 (via N-terminus); this interaction is essential for transcription initiation.</text>
</comment>
<comment type="subcellular location">
    <subcellularLocation>
        <location evidence="1">Host nucleus</location>
    </subcellularLocation>
    <subcellularLocation>
        <location evidence="1">Host cytoplasm</location>
    </subcellularLocation>
</comment>
<comment type="PTM">
    <text evidence="1">Phosphorylated by host PRKCA.</text>
</comment>
<comment type="similarity">
    <text evidence="1">Belongs to the influenza viruses polymerase PB1 family.</text>
</comment>
<reference key="1">
    <citation type="submission" date="2006-10" db="EMBL/GenBank/DDBJ databases">
        <authorList>
            <person name="Crescenzo-Chaigne B."/>
        </authorList>
    </citation>
    <scope>NUCLEOTIDE SEQUENCE [GENOMIC RNA]</scope>
</reference>
<reference key="2">
    <citation type="journal article" date="1999" name="Virology">
        <title>Comparative analysis of the ability of the polymerase complexes of influenza viruses type A, B and C to assemble into functional RNPs that allow expression and replication of heterotypic model RNA templates in vivo.</title>
        <authorList>
            <person name="Crescenzo-Chaigne B."/>
            <person name="Naffakh N."/>
            <person name="van der Werf S."/>
        </authorList>
    </citation>
    <scope>NUCLEOTIDE SEQUENCE [GENOMIC RNA] OF 2-754</scope>
</reference>